<sequence>MQPRVFLAVTLLALLASARALETEDASLLGYMQDYMQGYMEHASKTAQDALTRVQDSQMAQQARGWMSDSLSSLQDYWSSFKGKWSGFGFWDATPEEASPTPAPEGI</sequence>
<name>APOC3_HETGA</name>
<gene>
    <name evidence="5" type="primary">Apoc3</name>
</gene>
<organism evidence="6">
    <name type="scientific">Heterocephalus glaber</name>
    <name type="common">Naked mole rat</name>
    <dbReference type="NCBI Taxonomy" id="10181"/>
    <lineage>
        <taxon>Eukaryota</taxon>
        <taxon>Metazoa</taxon>
        <taxon>Chordata</taxon>
        <taxon>Craniata</taxon>
        <taxon>Vertebrata</taxon>
        <taxon>Euteleostomi</taxon>
        <taxon>Mammalia</taxon>
        <taxon>Eutheria</taxon>
        <taxon>Euarchontoglires</taxon>
        <taxon>Glires</taxon>
        <taxon>Rodentia</taxon>
        <taxon>Hystricomorpha</taxon>
        <taxon>Bathyergidae</taxon>
        <taxon>Heterocephalus</taxon>
    </lineage>
</organism>
<proteinExistence type="inferred from homology"/>
<reference key="1">
    <citation type="journal article" date="2011" name="Nature">
        <title>Genome sequencing reveals insights into physiology and longevity of the naked mole rat.</title>
        <authorList>
            <person name="Kim E.B."/>
            <person name="Fang X."/>
            <person name="Fushan A.A."/>
            <person name="Huang Z."/>
            <person name="Lobanov A.V."/>
            <person name="Han L."/>
            <person name="Marino S.M."/>
            <person name="Sun X."/>
            <person name="Turanov A.A."/>
            <person name="Yang P."/>
            <person name="Yim S.H."/>
            <person name="Zhao X."/>
            <person name="Kasaikina M.V."/>
            <person name="Stoletzki N."/>
            <person name="Peng C."/>
            <person name="Polak P."/>
            <person name="Xiong Z."/>
            <person name="Kiezun A."/>
            <person name="Zhu Y."/>
            <person name="Chen Y."/>
            <person name="Kryukov G.V."/>
            <person name="Zhang Q."/>
            <person name="Peshkin L."/>
            <person name="Yang L."/>
            <person name="Bronson R.T."/>
            <person name="Buffenstein R."/>
            <person name="Wang B."/>
            <person name="Han C."/>
            <person name="Li Q."/>
            <person name="Chen L."/>
            <person name="Zhao W."/>
            <person name="Sunyaev S.R."/>
            <person name="Park T.J."/>
            <person name="Zhang G."/>
            <person name="Wang J."/>
            <person name="Gladyshev V.N."/>
        </authorList>
    </citation>
    <scope>NUCLEOTIDE SEQUENCE [LARGE SCALE GENOMIC DNA]</scope>
</reference>
<reference key="2">
    <citation type="submission" date="2012-01" db="EMBL/GenBank/DDBJ databases">
        <authorList>
            <person name="Di Palma F."/>
            <person name="Alfoldi J."/>
            <person name="Johnson J."/>
            <person name="Berlin A."/>
            <person name="Gnerre S."/>
            <person name="Jaffe D."/>
            <person name="MacCallum I."/>
            <person name="Young S."/>
            <person name="Walker B.J."/>
            <person name="Lindblad-Toh K."/>
        </authorList>
    </citation>
    <scope>NUCLEOTIDE SEQUENCE [LARGE SCALE GENOMIC DNA]</scope>
</reference>
<reference key="3">
    <citation type="unpublished observations" date="2014-08">
        <authorList>
            <person name="Puppione D.L."/>
        </authorList>
    </citation>
    <scope>IDENTIFICATION</scope>
</reference>
<evidence type="ECO:0000250" key="1"/>
<evidence type="ECO:0000250" key="2">
    <source>
        <dbReference type="UniProtKB" id="P02656"/>
    </source>
</evidence>
<evidence type="ECO:0000250" key="3">
    <source>
        <dbReference type="UniProtKB" id="P33622"/>
    </source>
</evidence>
<evidence type="ECO:0000255" key="4"/>
<evidence type="ECO:0000305" key="5"/>
<evidence type="ECO:0000312" key="6">
    <source>
        <dbReference type="EMBL" id="EHB11535.1"/>
    </source>
</evidence>
<comment type="function">
    <text evidence="2">Component of triglyceride-rich very low density lipoproteins (VLDL) and high density lipoproteins (HDL) in plasma. Plays a multifaceted role in triglyceride homeostasis. Intracellularly, promotes hepatic very low density lipoprotein 1 (VLDL1) assembly and secretion; extracellularly, attenuates hydrolysis and clearance of triglyceride-rich lipoproteins (TRLs). Impairs the lipolysis of TRLs by inhibiting lipoprotein lipase and the hepatic uptake of TRLs by remnant receptors. Formed of several curved helices connected via semiflexible hinges, so that it can wrap tightly around the curved micelle surface and easily adapt to the different diameters of its natural binding partners.</text>
</comment>
<comment type="subcellular location">
    <subcellularLocation>
        <location evidence="2">Secreted</location>
    </subcellularLocation>
</comment>
<comment type="PTM">
    <text evidence="2">The most abundant glycoforms are characterized by an O-linked disaccharide galactose linked to N-acetylgalactosamine (Gal-GalNAc), further modified with up to 3 sialic acid residues. Less abundant glycoforms are characterized by more complex and fucosylated glycan moieties. O-glycosylated on Thr-101 with a core 1 or possibly core 8 glycan.</text>
</comment>
<comment type="similarity">
    <text evidence="5">Belongs to the apolipoprotein C3 family.</text>
</comment>
<comment type="sequence caution" evidence="5">
    <conflict type="erroneous gene model prediction">
        <sequence resource="EMBL-CDS" id="EHB11535"/>
    </conflict>
</comment>
<keyword id="KW-0162">Chylomicron</keyword>
<keyword id="KW-0325">Glycoprotein</keyword>
<keyword id="KW-0442">Lipid degradation</keyword>
<keyword id="KW-0443">Lipid metabolism</keyword>
<keyword id="KW-0445">Lipid transport</keyword>
<keyword id="KW-0449">Lipoprotein</keyword>
<keyword id="KW-0558">Oxidation</keyword>
<keyword id="KW-1185">Reference proteome</keyword>
<keyword id="KW-0964">Secreted</keyword>
<keyword id="KW-0730">Sialic acid</keyword>
<keyword id="KW-0732">Signal</keyword>
<keyword id="KW-0813">Transport</keyword>
<keyword id="KW-0850">VLDL</keyword>
<accession>G5BQH4</accession>
<feature type="signal peptide" evidence="4">
    <location>
        <begin position="1"/>
        <end position="20"/>
    </location>
</feature>
<feature type="chain" id="PRO_0000430652" description="Apolipoprotein C-III">
    <location>
        <begin position="21"/>
        <end position="107"/>
    </location>
</feature>
<feature type="region of interest" description="Lipid-binding" evidence="1">
    <location>
        <begin position="72"/>
        <end position="106"/>
    </location>
</feature>
<feature type="site" description="May interact with the LDL receptor" evidence="2">
    <location>
        <position position="45"/>
    </location>
</feature>
<feature type="modified residue" description="Methionine sulfoxide" evidence="3">
    <location>
        <position position="67"/>
    </location>
</feature>
<feature type="glycosylation site" description="O-linked (GalNAc...) threonine" evidence="2">
    <location>
        <position position="101"/>
    </location>
</feature>
<dbReference type="EMBL" id="JH171387">
    <property type="protein sequence ID" value="EHB11535.1"/>
    <property type="status" value="ALT_SEQ"/>
    <property type="molecule type" value="Genomic_DNA"/>
</dbReference>
<dbReference type="EMBL" id="AHKG01061059">
    <property type="status" value="NOT_ANNOTATED_CDS"/>
    <property type="molecule type" value="Genomic_DNA"/>
</dbReference>
<dbReference type="RefSeq" id="XP_004856700.1">
    <property type="nucleotide sequence ID" value="XM_004856643.3"/>
</dbReference>
<dbReference type="SMR" id="G5BQH4"/>
<dbReference type="FunCoup" id="G5BQH4">
    <property type="interactions" value="88"/>
</dbReference>
<dbReference type="STRING" id="10181.G5BQH4"/>
<dbReference type="GlyCosmos" id="G5BQH4">
    <property type="glycosylation" value="1 site, No reported glycans"/>
</dbReference>
<dbReference type="GeneID" id="101725083"/>
<dbReference type="KEGG" id="hgl:101725083"/>
<dbReference type="CTD" id="345"/>
<dbReference type="eggNOG" id="ENOG502SZ00">
    <property type="taxonomic scope" value="Eukaryota"/>
</dbReference>
<dbReference type="InParanoid" id="G5BQH4"/>
<dbReference type="OMA" id="YWSTFKG"/>
<dbReference type="OrthoDB" id="9049572at2759"/>
<dbReference type="Proteomes" id="UP000006813">
    <property type="component" value="Unassembled WGS sequence"/>
</dbReference>
<dbReference type="Proteomes" id="UP000694906">
    <property type="component" value="Unplaced"/>
</dbReference>
<dbReference type="Bgee" id="ENSHGLG00000019030">
    <property type="expression patterns" value="Expressed in adult mammalian kidney and 6 other cell types or tissues"/>
</dbReference>
<dbReference type="GO" id="GO:0042627">
    <property type="term" value="C:chylomicron"/>
    <property type="evidence" value="ECO:0007669"/>
    <property type="project" value="UniProtKB-KW"/>
</dbReference>
<dbReference type="GO" id="GO:0034363">
    <property type="term" value="C:intermediate-density lipoprotein particle"/>
    <property type="evidence" value="ECO:0007669"/>
    <property type="project" value="Ensembl"/>
</dbReference>
<dbReference type="GO" id="GO:0034366">
    <property type="term" value="C:spherical high-density lipoprotein particle"/>
    <property type="evidence" value="ECO:0007669"/>
    <property type="project" value="Ensembl"/>
</dbReference>
<dbReference type="GO" id="GO:0034361">
    <property type="term" value="C:very-low-density lipoprotein particle"/>
    <property type="evidence" value="ECO:0007669"/>
    <property type="project" value="UniProtKB-KW"/>
</dbReference>
<dbReference type="GO" id="GO:0070653">
    <property type="term" value="F:high-density lipoprotein particle receptor binding"/>
    <property type="evidence" value="ECO:0007669"/>
    <property type="project" value="Ensembl"/>
</dbReference>
<dbReference type="GO" id="GO:0055102">
    <property type="term" value="F:lipase inhibitor activity"/>
    <property type="evidence" value="ECO:0007669"/>
    <property type="project" value="Ensembl"/>
</dbReference>
<dbReference type="GO" id="GO:0005543">
    <property type="term" value="F:phospholipid binding"/>
    <property type="evidence" value="ECO:0007669"/>
    <property type="project" value="Ensembl"/>
</dbReference>
<dbReference type="GO" id="GO:0033344">
    <property type="term" value="P:cholesterol efflux"/>
    <property type="evidence" value="ECO:0007669"/>
    <property type="project" value="Ensembl"/>
</dbReference>
<dbReference type="GO" id="GO:0042632">
    <property type="term" value="P:cholesterol homeostasis"/>
    <property type="evidence" value="ECO:0007669"/>
    <property type="project" value="Ensembl"/>
</dbReference>
<dbReference type="GO" id="GO:0034382">
    <property type="term" value="P:chylomicron remnant clearance"/>
    <property type="evidence" value="ECO:0007669"/>
    <property type="project" value="Ensembl"/>
</dbReference>
<dbReference type="GO" id="GO:0007186">
    <property type="term" value="P:G protein-coupled receptor signaling pathway"/>
    <property type="evidence" value="ECO:0007669"/>
    <property type="project" value="Ensembl"/>
</dbReference>
<dbReference type="GO" id="GO:0034375">
    <property type="term" value="P:high-density lipoprotein particle remodeling"/>
    <property type="evidence" value="ECO:0007669"/>
    <property type="project" value="Ensembl"/>
</dbReference>
<dbReference type="GO" id="GO:0042157">
    <property type="term" value="P:lipoprotein metabolic process"/>
    <property type="evidence" value="ECO:0007669"/>
    <property type="project" value="InterPro"/>
</dbReference>
<dbReference type="GO" id="GO:0060621">
    <property type="term" value="P:negative regulation of cholesterol import"/>
    <property type="evidence" value="ECO:0007669"/>
    <property type="project" value="Ensembl"/>
</dbReference>
<dbReference type="GO" id="GO:0045717">
    <property type="term" value="P:negative regulation of fatty acid biosynthetic process"/>
    <property type="evidence" value="ECO:0007669"/>
    <property type="project" value="Ensembl"/>
</dbReference>
<dbReference type="GO" id="GO:0010987">
    <property type="term" value="P:negative regulation of high-density lipoprotein particle clearance"/>
    <property type="evidence" value="ECO:0007669"/>
    <property type="project" value="Ensembl"/>
</dbReference>
<dbReference type="GO" id="GO:0010989">
    <property type="term" value="P:negative regulation of low-density lipoprotein particle clearance"/>
    <property type="evidence" value="ECO:0007669"/>
    <property type="project" value="Ensembl"/>
</dbReference>
<dbReference type="GO" id="GO:0048261">
    <property type="term" value="P:negative regulation of receptor-mediated endocytosis"/>
    <property type="evidence" value="ECO:0007669"/>
    <property type="project" value="Ensembl"/>
</dbReference>
<dbReference type="GO" id="GO:0010897">
    <property type="term" value="P:negative regulation of triglyceride catabolic process"/>
    <property type="evidence" value="ECO:0007669"/>
    <property type="project" value="Ensembl"/>
</dbReference>
<dbReference type="GO" id="GO:0010916">
    <property type="term" value="P:negative regulation of very-low-density lipoprotein particle clearance"/>
    <property type="evidence" value="ECO:0007669"/>
    <property type="project" value="Ensembl"/>
</dbReference>
<dbReference type="GO" id="GO:0010903">
    <property type="term" value="P:negative regulation of very-low-density lipoprotein particle remodeling"/>
    <property type="evidence" value="ECO:0007669"/>
    <property type="project" value="Ensembl"/>
</dbReference>
<dbReference type="GO" id="GO:0033700">
    <property type="term" value="P:phospholipid efflux"/>
    <property type="evidence" value="ECO:0007669"/>
    <property type="project" value="Ensembl"/>
</dbReference>
<dbReference type="GO" id="GO:0032489">
    <property type="term" value="P:regulation of Cdc42 protein signal transduction"/>
    <property type="evidence" value="ECO:0007669"/>
    <property type="project" value="Ensembl"/>
</dbReference>
<dbReference type="GO" id="GO:0019433">
    <property type="term" value="P:triglyceride catabolic process"/>
    <property type="evidence" value="ECO:0007669"/>
    <property type="project" value="Ensembl"/>
</dbReference>
<dbReference type="GO" id="GO:0070328">
    <property type="term" value="P:triglyceride homeostasis"/>
    <property type="evidence" value="ECO:0007669"/>
    <property type="project" value="Ensembl"/>
</dbReference>
<dbReference type="Gene3D" id="6.10.90.10">
    <property type="entry name" value="Apolipoprotein CIII"/>
    <property type="match status" value="1"/>
</dbReference>
<dbReference type="InterPro" id="IPR008403">
    <property type="entry name" value="Apo-CIII"/>
</dbReference>
<dbReference type="InterPro" id="IPR038195">
    <property type="entry name" value="Apo_CIII_sf"/>
</dbReference>
<dbReference type="PANTHER" id="PTHR14225">
    <property type="entry name" value="APOLIPOPROTEIN C-III"/>
    <property type="match status" value="1"/>
</dbReference>
<dbReference type="PANTHER" id="PTHR14225:SF0">
    <property type="entry name" value="APOLIPOPROTEIN C-III"/>
    <property type="match status" value="1"/>
</dbReference>
<dbReference type="Pfam" id="PF05778">
    <property type="entry name" value="Apo-CIII"/>
    <property type="match status" value="1"/>
</dbReference>
<dbReference type="SUPFAM" id="SSF47162">
    <property type="entry name" value="Apolipoprotein"/>
    <property type="match status" value="1"/>
</dbReference>
<protein>
    <recommendedName>
        <fullName evidence="6">Apolipoprotein C-III</fullName>
        <shortName>Apo-CIII</shortName>
        <shortName>ApoC-III</shortName>
    </recommendedName>
    <alternativeName>
        <fullName>Apolipoprotein C3</fullName>
    </alternativeName>
</protein>